<organism>
    <name type="scientific">Schizosaccharomyces pombe (strain 972 / ATCC 24843)</name>
    <name type="common">Fission yeast</name>
    <dbReference type="NCBI Taxonomy" id="284812"/>
    <lineage>
        <taxon>Eukaryota</taxon>
        <taxon>Fungi</taxon>
        <taxon>Dikarya</taxon>
        <taxon>Ascomycota</taxon>
        <taxon>Taphrinomycotina</taxon>
        <taxon>Schizosaccharomycetes</taxon>
        <taxon>Schizosaccharomycetales</taxon>
        <taxon>Schizosaccharomycetaceae</taxon>
        <taxon>Schizosaccharomyces</taxon>
    </lineage>
</organism>
<gene>
    <name type="primary">kgd1</name>
    <name type="ORF">SPBC3H7.03c</name>
</gene>
<proteinExistence type="inferred from homology"/>
<evidence type="ECO:0000250" key="1"/>
<evidence type="ECO:0000250" key="2">
    <source>
        <dbReference type="UniProtKB" id="Q02218"/>
    </source>
</evidence>
<evidence type="ECO:0000255" key="3"/>
<evidence type="ECO:0000305" key="4"/>
<keyword id="KW-0460">Magnesium</keyword>
<keyword id="KW-0479">Metal-binding</keyword>
<keyword id="KW-0496">Mitochondrion</keyword>
<keyword id="KW-0560">Oxidoreductase</keyword>
<keyword id="KW-1185">Reference proteome</keyword>
<keyword id="KW-0786">Thiamine pyrophosphate</keyword>
<keyword id="KW-0809">Transit peptide</keyword>
<keyword id="KW-0816">Tricarboxylic acid cycle</keyword>
<comment type="function">
    <text evidence="1">The 2-oxoglutarate dehydrogenase complex catalyzes the overall conversion of 2-oxoglutarate to succinyl-CoA and CO(2). It contains multiple copies of three enzymatic components: 2-oxoglutarate dehydrogenase (E1), dihydrolipoamide succinyltransferase (E2) and lipoamide dehydrogenase (E3) (By similarity).</text>
</comment>
<comment type="catalytic activity">
    <reaction>
        <text>N(6)-[(R)-lipoyl]-L-lysyl-[protein] + 2-oxoglutarate + H(+) = N(6)-[(R)-S(8)-succinyldihydrolipoyl]-L-lysyl-[protein] + CO2</text>
        <dbReference type="Rhea" id="RHEA:12188"/>
        <dbReference type="Rhea" id="RHEA-COMP:10474"/>
        <dbReference type="Rhea" id="RHEA-COMP:20092"/>
        <dbReference type="ChEBI" id="CHEBI:15378"/>
        <dbReference type="ChEBI" id="CHEBI:16526"/>
        <dbReference type="ChEBI" id="CHEBI:16810"/>
        <dbReference type="ChEBI" id="CHEBI:83099"/>
        <dbReference type="ChEBI" id="CHEBI:83120"/>
        <dbReference type="EC" id="1.2.4.2"/>
    </reaction>
</comment>
<comment type="cofactor">
    <cofactor evidence="2">
        <name>thiamine diphosphate</name>
        <dbReference type="ChEBI" id="CHEBI:58937"/>
    </cofactor>
    <cofactor evidence="2">
        <name>Mg(2+)</name>
        <dbReference type="ChEBI" id="CHEBI:18420"/>
    </cofactor>
</comment>
<comment type="activity regulation">
    <text evidence="1">Catabolite repressed.</text>
</comment>
<comment type="subcellular location">
    <subcellularLocation>
        <location evidence="1">Mitochondrion matrix</location>
    </subcellularLocation>
</comment>
<comment type="similarity">
    <text evidence="4">Belongs to the alpha-ketoglutarate dehydrogenase family.</text>
</comment>
<accession>O74378</accession>
<name>ODO1_SCHPO</name>
<reference key="1">
    <citation type="journal article" date="2002" name="Nature">
        <title>The genome sequence of Schizosaccharomyces pombe.</title>
        <authorList>
            <person name="Wood V."/>
            <person name="Gwilliam R."/>
            <person name="Rajandream M.A."/>
            <person name="Lyne M.H."/>
            <person name="Lyne R."/>
            <person name="Stewart A."/>
            <person name="Sgouros J.G."/>
            <person name="Peat N."/>
            <person name="Hayles J."/>
            <person name="Baker S.G."/>
            <person name="Basham D."/>
            <person name="Bowman S."/>
            <person name="Brooks K."/>
            <person name="Brown D."/>
            <person name="Brown S."/>
            <person name="Chillingworth T."/>
            <person name="Churcher C.M."/>
            <person name="Collins M."/>
            <person name="Connor R."/>
            <person name="Cronin A."/>
            <person name="Davis P."/>
            <person name="Feltwell T."/>
            <person name="Fraser A."/>
            <person name="Gentles S."/>
            <person name="Goble A."/>
            <person name="Hamlin N."/>
            <person name="Harris D.E."/>
            <person name="Hidalgo J."/>
            <person name="Hodgson G."/>
            <person name="Holroyd S."/>
            <person name="Hornsby T."/>
            <person name="Howarth S."/>
            <person name="Huckle E.J."/>
            <person name="Hunt S."/>
            <person name="Jagels K."/>
            <person name="James K.D."/>
            <person name="Jones L."/>
            <person name="Jones M."/>
            <person name="Leather S."/>
            <person name="McDonald S."/>
            <person name="McLean J."/>
            <person name="Mooney P."/>
            <person name="Moule S."/>
            <person name="Mungall K.L."/>
            <person name="Murphy L.D."/>
            <person name="Niblett D."/>
            <person name="Odell C."/>
            <person name="Oliver K."/>
            <person name="O'Neil S."/>
            <person name="Pearson D."/>
            <person name="Quail M.A."/>
            <person name="Rabbinowitsch E."/>
            <person name="Rutherford K.M."/>
            <person name="Rutter S."/>
            <person name="Saunders D."/>
            <person name="Seeger K."/>
            <person name="Sharp S."/>
            <person name="Skelton J."/>
            <person name="Simmonds M.N."/>
            <person name="Squares R."/>
            <person name="Squares S."/>
            <person name="Stevens K."/>
            <person name="Taylor K."/>
            <person name="Taylor R.G."/>
            <person name="Tivey A."/>
            <person name="Walsh S.V."/>
            <person name="Warren T."/>
            <person name="Whitehead S."/>
            <person name="Woodward J.R."/>
            <person name="Volckaert G."/>
            <person name="Aert R."/>
            <person name="Robben J."/>
            <person name="Grymonprez B."/>
            <person name="Weltjens I."/>
            <person name="Vanstreels E."/>
            <person name="Rieger M."/>
            <person name="Schaefer M."/>
            <person name="Mueller-Auer S."/>
            <person name="Gabel C."/>
            <person name="Fuchs M."/>
            <person name="Duesterhoeft A."/>
            <person name="Fritzc C."/>
            <person name="Holzer E."/>
            <person name="Moestl D."/>
            <person name="Hilbert H."/>
            <person name="Borzym K."/>
            <person name="Langer I."/>
            <person name="Beck A."/>
            <person name="Lehrach H."/>
            <person name="Reinhardt R."/>
            <person name="Pohl T.M."/>
            <person name="Eger P."/>
            <person name="Zimmermann W."/>
            <person name="Wedler H."/>
            <person name="Wambutt R."/>
            <person name="Purnelle B."/>
            <person name="Goffeau A."/>
            <person name="Cadieu E."/>
            <person name="Dreano S."/>
            <person name="Gloux S."/>
            <person name="Lelaure V."/>
            <person name="Mottier S."/>
            <person name="Galibert F."/>
            <person name="Aves S.J."/>
            <person name="Xiang Z."/>
            <person name="Hunt C."/>
            <person name="Moore K."/>
            <person name="Hurst S.M."/>
            <person name="Lucas M."/>
            <person name="Rochet M."/>
            <person name="Gaillardin C."/>
            <person name="Tallada V.A."/>
            <person name="Garzon A."/>
            <person name="Thode G."/>
            <person name="Daga R.R."/>
            <person name="Cruzado L."/>
            <person name="Jimenez J."/>
            <person name="Sanchez M."/>
            <person name="del Rey F."/>
            <person name="Benito J."/>
            <person name="Dominguez A."/>
            <person name="Revuelta J.L."/>
            <person name="Moreno S."/>
            <person name="Armstrong J."/>
            <person name="Forsburg S.L."/>
            <person name="Cerutti L."/>
            <person name="Lowe T."/>
            <person name="McCombie W.R."/>
            <person name="Paulsen I."/>
            <person name="Potashkin J."/>
            <person name="Shpakovski G.V."/>
            <person name="Ussery D."/>
            <person name="Barrell B.G."/>
            <person name="Nurse P."/>
        </authorList>
    </citation>
    <scope>NUCLEOTIDE SEQUENCE [LARGE SCALE GENOMIC DNA]</scope>
    <source>
        <strain>972 / ATCC 24843</strain>
    </source>
</reference>
<reference key="2">
    <citation type="journal article" date="2006" name="Nat. Biotechnol.">
        <title>ORFeome cloning and global analysis of protein localization in the fission yeast Schizosaccharomyces pombe.</title>
        <authorList>
            <person name="Matsuyama A."/>
            <person name="Arai R."/>
            <person name="Yashiroda Y."/>
            <person name="Shirai A."/>
            <person name="Kamata A."/>
            <person name="Sekido S."/>
            <person name="Kobayashi Y."/>
            <person name="Hashimoto A."/>
            <person name="Hamamoto M."/>
            <person name="Hiraoka Y."/>
            <person name="Horinouchi S."/>
            <person name="Yoshida M."/>
        </authorList>
    </citation>
    <scope>SUBCELLULAR LOCATION [LARGE SCALE ANALYSIS]</scope>
</reference>
<dbReference type="EC" id="1.2.4.2"/>
<dbReference type="EMBL" id="CU329671">
    <property type="protein sequence ID" value="CAA20299.1"/>
    <property type="molecule type" value="Genomic_DNA"/>
</dbReference>
<dbReference type="PIR" id="T40412">
    <property type="entry name" value="T40412"/>
</dbReference>
<dbReference type="RefSeq" id="NP_595772.1">
    <property type="nucleotide sequence ID" value="NM_001021673.2"/>
</dbReference>
<dbReference type="SMR" id="O74378"/>
<dbReference type="BioGRID" id="277507">
    <property type="interactions" value="4"/>
</dbReference>
<dbReference type="FunCoup" id="O74378">
    <property type="interactions" value="231"/>
</dbReference>
<dbReference type="STRING" id="284812.O74378"/>
<dbReference type="iPTMnet" id="O74378"/>
<dbReference type="PaxDb" id="4896-SPBC3H7.03c.1"/>
<dbReference type="EnsemblFungi" id="SPBC3H7.03c.1">
    <property type="protein sequence ID" value="SPBC3H7.03c.1:pep"/>
    <property type="gene ID" value="SPBC3H7.03c"/>
</dbReference>
<dbReference type="GeneID" id="2540991"/>
<dbReference type="KEGG" id="spo:2540991"/>
<dbReference type="PomBase" id="SPBC3H7.03c">
    <property type="gene designation" value="kgd1"/>
</dbReference>
<dbReference type="VEuPathDB" id="FungiDB:SPBC3H7.03c"/>
<dbReference type="eggNOG" id="KOG0450">
    <property type="taxonomic scope" value="Eukaryota"/>
</dbReference>
<dbReference type="HOGENOM" id="CLU_004709_1_1_1"/>
<dbReference type="InParanoid" id="O74378"/>
<dbReference type="OMA" id="RDSYCRT"/>
<dbReference type="PhylomeDB" id="O74378"/>
<dbReference type="Reactome" id="R-SPO-6783984">
    <property type="pathway name" value="Glycine degradation"/>
</dbReference>
<dbReference type="Reactome" id="R-SPO-9837999">
    <property type="pathway name" value="Mitochondrial protein degradation"/>
</dbReference>
<dbReference type="Reactome" id="R-SPO-9853506">
    <property type="pathway name" value="OGDH complex synthesizes succinyl-CoA from 2-OG"/>
</dbReference>
<dbReference type="PRO" id="PR:O74378"/>
<dbReference type="Proteomes" id="UP000002485">
    <property type="component" value="Chromosome II"/>
</dbReference>
<dbReference type="GO" id="GO:0042645">
    <property type="term" value="C:mitochondrial nucleoid"/>
    <property type="evidence" value="ECO:0000250"/>
    <property type="project" value="PomBase"/>
</dbReference>
<dbReference type="GO" id="GO:0005739">
    <property type="term" value="C:mitochondrion"/>
    <property type="evidence" value="ECO:0007005"/>
    <property type="project" value="PomBase"/>
</dbReference>
<dbReference type="GO" id="GO:0045252">
    <property type="term" value="C:oxoglutarate dehydrogenase complex"/>
    <property type="evidence" value="ECO:0000318"/>
    <property type="project" value="GO_Central"/>
</dbReference>
<dbReference type="GO" id="GO:0046872">
    <property type="term" value="F:metal ion binding"/>
    <property type="evidence" value="ECO:0007669"/>
    <property type="project" value="UniProtKB-KW"/>
</dbReference>
<dbReference type="GO" id="GO:0004591">
    <property type="term" value="F:oxoglutarate dehydrogenase (succinyl-transferring) activity"/>
    <property type="evidence" value="ECO:0000318"/>
    <property type="project" value="GO_Central"/>
</dbReference>
<dbReference type="GO" id="GO:0030976">
    <property type="term" value="F:thiamine pyrophosphate binding"/>
    <property type="evidence" value="ECO:0007669"/>
    <property type="project" value="InterPro"/>
</dbReference>
<dbReference type="GO" id="GO:0006099">
    <property type="term" value="P:tricarboxylic acid cycle"/>
    <property type="evidence" value="ECO:0000318"/>
    <property type="project" value="GO_Central"/>
</dbReference>
<dbReference type="CDD" id="cd02016">
    <property type="entry name" value="TPP_E1_OGDC_like"/>
    <property type="match status" value="1"/>
</dbReference>
<dbReference type="FunFam" id="1.10.287.1150:FF:000002">
    <property type="entry name" value="2-oxoglutarate dehydrogenase E1 component"/>
    <property type="match status" value="1"/>
</dbReference>
<dbReference type="FunFam" id="3.40.50.11610:FF:000009">
    <property type="entry name" value="2-oxoglutarate dehydrogenase E1 component"/>
    <property type="match status" value="1"/>
</dbReference>
<dbReference type="FunFam" id="3.40.50.12470:FF:000003">
    <property type="entry name" value="2-oxoglutarate dehydrogenase E1 component"/>
    <property type="match status" value="1"/>
</dbReference>
<dbReference type="FunFam" id="3.40.50.970:FF:000002">
    <property type="entry name" value="2-oxoglutarate dehydrogenase, E1 component"/>
    <property type="match status" value="1"/>
</dbReference>
<dbReference type="Gene3D" id="3.40.50.12470">
    <property type="match status" value="1"/>
</dbReference>
<dbReference type="Gene3D" id="3.40.50.970">
    <property type="match status" value="1"/>
</dbReference>
<dbReference type="Gene3D" id="3.40.50.11610">
    <property type="entry name" value="Multifunctional 2-oxoglutarate metabolism enzyme, C-terminal domain"/>
    <property type="match status" value="1"/>
</dbReference>
<dbReference type="Gene3D" id="1.10.287.1150">
    <property type="entry name" value="TPP helical domain"/>
    <property type="match status" value="1"/>
</dbReference>
<dbReference type="InterPro" id="IPR032106">
    <property type="entry name" value="2-oxogl_dehyd_N"/>
</dbReference>
<dbReference type="InterPro" id="IPR011603">
    <property type="entry name" value="2oxoglutarate_DH_E1"/>
</dbReference>
<dbReference type="InterPro" id="IPR001017">
    <property type="entry name" value="DH_E1"/>
</dbReference>
<dbReference type="InterPro" id="IPR042179">
    <property type="entry name" value="KGD_C_sf"/>
</dbReference>
<dbReference type="InterPro" id="IPR031717">
    <property type="entry name" value="ODO-1/KGD_C"/>
</dbReference>
<dbReference type="InterPro" id="IPR029061">
    <property type="entry name" value="THDP-binding"/>
</dbReference>
<dbReference type="InterPro" id="IPR005475">
    <property type="entry name" value="Transketolase-like_Pyr-bd"/>
</dbReference>
<dbReference type="NCBIfam" id="TIGR00239">
    <property type="entry name" value="2oxo_dh_E1"/>
    <property type="match status" value="1"/>
</dbReference>
<dbReference type="NCBIfam" id="NF006914">
    <property type="entry name" value="PRK09404.1"/>
    <property type="match status" value="1"/>
</dbReference>
<dbReference type="NCBIfam" id="NF008907">
    <property type="entry name" value="PRK12270.1"/>
    <property type="match status" value="1"/>
</dbReference>
<dbReference type="PANTHER" id="PTHR23152:SF4">
    <property type="entry name" value="2-OXOADIPATE DEHYDROGENASE COMPLEX COMPONENT E1"/>
    <property type="match status" value="1"/>
</dbReference>
<dbReference type="PANTHER" id="PTHR23152">
    <property type="entry name" value="2-OXOGLUTARATE DEHYDROGENASE"/>
    <property type="match status" value="1"/>
</dbReference>
<dbReference type="Pfam" id="PF16078">
    <property type="entry name" value="2-oxogl_dehyd_N"/>
    <property type="match status" value="1"/>
</dbReference>
<dbReference type="Pfam" id="PF00676">
    <property type="entry name" value="E1_dh"/>
    <property type="match status" value="1"/>
</dbReference>
<dbReference type="Pfam" id="PF16870">
    <property type="entry name" value="OxoGdeHyase_C"/>
    <property type="match status" value="1"/>
</dbReference>
<dbReference type="Pfam" id="PF02779">
    <property type="entry name" value="Transket_pyr"/>
    <property type="match status" value="1"/>
</dbReference>
<dbReference type="PIRSF" id="PIRSF000157">
    <property type="entry name" value="Oxoglu_dh_E1"/>
    <property type="match status" value="1"/>
</dbReference>
<dbReference type="SMART" id="SM00861">
    <property type="entry name" value="Transket_pyr"/>
    <property type="match status" value="1"/>
</dbReference>
<dbReference type="SUPFAM" id="SSF52518">
    <property type="entry name" value="Thiamin diphosphate-binding fold (THDP-binding)"/>
    <property type="match status" value="2"/>
</dbReference>
<protein>
    <recommendedName>
        <fullName>2-oxoglutarate dehydrogenase, mitochondrial</fullName>
        <ecNumber>1.2.4.2</ecNumber>
    </recommendedName>
    <alternativeName>
        <fullName>2-oxoglutarate dehydrogenase complex component E1</fullName>
        <shortName>OGDC-E1</shortName>
    </alternativeName>
    <alternativeName>
        <fullName>Alpha-ketoglutarate dehydrogenase</fullName>
    </alternativeName>
</protein>
<feature type="transit peptide" description="Mitochondrion" evidence="3">
    <location>
        <begin position="1"/>
        <end position="39"/>
    </location>
</feature>
<feature type="chain" id="PRO_0000315629" description="2-oxoglutarate dehydrogenase, mitochondrial">
    <location>
        <begin position="40"/>
        <end position="1009"/>
    </location>
</feature>
<feature type="binding site" evidence="2">
    <location>
        <position position="305"/>
    </location>
    <ligand>
        <name>thiamine diphosphate</name>
        <dbReference type="ChEBI" id="CHEBI:58937"/>
    </ligand>
</feature>
<feature type="binding site" evidence="2">
    <location>
        <position position="404"/>
    </location>
    <ligand>
        <name>Mg(2+)</name>
        <dbReference type="ChEBI" id="CHEBI:18420"/>
    </ligand>
</feature>
<feature type="binding site" evidence="2">
    <location>
        <position position="404"/>
    </location>
    <ligand>
        <name>thiamine diphosphate</name>
        <dbReference type="ChEBI" id="CHEBI:58937"/>
    </ligand>
</feature>
<feature type="binding site" evidence="2">
    <location>
        <position position="437"/>
    </location>
    <ligand>
        <name>Mg(2+)</name>
        <dbReference type="ChEBI" id="CHEBI:18420"/>
    </ligand>
</feature>
<feature type="binding site" evidence="2">
    <location>
        <position position="437"/>
    </location>
    <ligand>
        <name>thiamine diphosphate</name>
        <dbReference type="ChEBI" id="CHEBI:58937"/>
    </ligand>
</feature>
<feature type="binding site" evidence="2">
    <location>
        <position position="439"/>
    </location>
    <ligand>
        <name>Mg(2+)</name>
        <dbReference type="ChEBI" id="CHEBI:18420"/>
    </ligand>
</feature>
<feature type="binding site" evidence="2">
    <location>
        <position position="439"/>
    </location>
    <ligand>
        <name>thiamine diphosphate</name>
        <dbReference type="ChEBI" id="CHEBI:58937"/>
    </ligand>
</feature>
<feature type="binding site" evidence="2">
    <location>
        <position position="669"/>
    </location>
    <ligand>
        <name>thiamine diphosphate</name>
        <dbReference type="ChEBI" id="CHEBI:58937"/>
    </ligand>
</feature>
<sequence>MLRFIPSSAKARALRRSAVTAYRLNRLTCLSSLQQNRTFATQPTDDFLTGGAADYVDEMYDAWKKDPNSVHASWQAYFKNVQERGVSPSKAFQAPPLLDYADSYTALDSSLINGNNYADIDVGIYMKVQLLVRAYQSRGHHLAKLDPLGINVNHNRPSELTLEHYGFTESDLNRTIHLGPGILPNFREAGRKTMTLREIVETCEKIYCGSFAVEFTHISSRKRSNWILSHLETPTPFRYSHDQKIMIFDRLSWADSFERFLFTKFPNDKRFGLEGCEAMVPGMKALIDRSVDEGISNIVIGMAHRGRLNLLHNIVRKPAQAIFSEFRGTQDPDDEGSGDVKYHLGMNYQRPTPSGKRVSLSLVANPSHLEAEDPVVLGKVRAIQHYTSDEASHEQSMGILIHGDAAFAAQGVVYETFGLHALPGYSTGGTVHIVINNQIGFTTDPRFARSTPYCTDIAKSMEAPIFHVNGDDVEAVTFICQLAADWRKAFKTDVVVDIVCYRRHGHNETDQPSFTQPRMYKAIAKHPPTFKIYTQQLLQEKTVSKAEVDAQEKRVWDILESSFESSKNYKSDHREWLSNPWVGFASPKDLMTKILPSYPTGVNIDTLKQIGKALYTLPEGFDAHRNLKRILNNRNKSISSGEGIDMPTAEALAFGTLLEEGHHVRVSGQDVERGTFSQRHAVLHDQSSENVYIPLNHLSPNQASFVIRNSSLSEYGVLGFEYGYSLSSPNALVVWEAQFGDFANNAQCIIDQFIAAGETKWLQRTGIVLSLPHGYDGQGPEHSSARMERYLQLCNEDPREFPSEEKLQRQHQDCNIQAIYVTKPSQYFHALRRNIHRQFRKPLVIFFSKSLLRHPAARSTIDEFDEKHGFKLILEEEEHGKSILPPEKIEKLIICSGQVWVALSKAREENKIDNIAITRVEQLHPFGWKQMAANISQYPNLKEIIWCQEEPLNAGAWTYMEPRIYTILKHLGRDLPVRYAGRPPSASVAAGNKQQHLAEQEQFLNDALL</sequence>